<keyword id="KW-1003">Cell membrane</keyword>
<keyword id="KW-0285">Flavoprotein</keyword>
<keyword id="KW-0288">FMN</keyword>
<keyword id="KW-0472">Membrane</keyword>
<keyword id="KW-0560">Oxidoreductase</keyword>
<keyword id="KW-0665">Pyrimidine biosynthesis</keyword>
<sequence length="351" mass="37431">MSLLPYALARSFLFGMDAEAAHELTMDMLARGQRTPLQWAWCNETVSDPIELAGLRFPNRVGLAAGLDKNARCIDALAAMGFGFVEVGTVTPRAQPGNPKPRMFRLPEARALINRLGFNNEGLDAFVANVQRSQVRTQGRGQSKLLLGLNIGKNATTPIEDATRDYLTCLEGVYPHADYVTVNISSPNTQNLRALQSDAALDGLLGAIAEHREQLAAAQGRRVPIFVKIAPDLDEAQVAVIATTLQRHGMDGVVATNTTIRRDAVQGLRHAGETGGLSGAPVLEASNAVIRQLRAALGPTFPIIGVGGILSAEDAVSKIRAGADVVQIYTGLIYEGPALVGRAAKAIRDLR</sequence>
<evidence type="ECO:0000255" key="1">
    <source>
        <dbReference type="HAMAP-Rule" id="MF_00225"/>
    </source>
</evidence>
<protein>
    <recommendedName>
        <fullName evidence="1">Dihydroorotate dehydrogenase (quinone)</fullName>
        <ecNumber evidence="1">1.3.5.2</ecNumber>
    </recommendedName>
    <alternativeName>
        <fullName evidence="1">DHOdehase</fullName>
        <shortName evidence="1">DHOD</shortName>
        <shortName evidence="1">DHODase</shortName>
    </alternativeName>
    <alternativeName>
        <fullName evidence="1">Dihydroorotate oxidase</fullName>
    </alternativeName>
</protein>
<accession>A1W7S6</accession>
<comment type="function">
    <text evidence="1">Catalyzes the conversion of dihydroorotate to orotate with quinone as electron acceptor.</text>
</comment>
<comment type="catalytic activity">
    <reaction evidence="1">
        <text>(S)-dihydroorotate + a quinone = orotate + a quinol</text>
        <dbReference type="Rhea" id="RHEA:30187"/>
        <dbReference type="ChEBI" id="CHEBI:24646"/>
        <dbReference type="ChEBI" id="CHEBI:30839"/>
        <dbReference type="ChEBI" id="CHEBI:30864"/>
        <dbReference type="ChEBI" id="CHEBI:132124"/>
        <dbReference type="EC" id="1.3.5.2"/>
    </reaction>
</comment>
<comment type="cofactor">
    <cofactor evidence="1">
        <name>FMN</name>
        <dbReference type="ChEBI" id="CHEBI:58210"/>
    </cofactor>
    <text evidence="1">Binds 1 FMN per subunit.</text>
</comment>
<comment type="pathway">
    <text evidence="1">Pyrimidine metabolism; UMP biosynthesis via de novo pathway; orotate from (S)-dihydroorotate (quinone route): step 1/1.</text>
</comment>
<comment type="subunit">
    <text evidence="1">Monomer.</text>
</comment>
<comment type="subcellular location">
    <subcellularLocation>
        <location evidence="1">Cell membrane</location>
        <topology evidence="1">Peripheral membrane protein</topology>
    </subcellularLocation>
</comment>
<comment type="similarity">
    <text evidence="1">Belongs to the dihydroorotate dehydrogenase family. Type 2 subfamily.</text>
</comment>
<reference key="1">
    <citation type="submission" date="2006-12" db="EMBL/GenBank/DDBJ databases">
        <title>Complete sequence of chromosome 1 of Acidovorax sp. JS42.</title>
        <authorList>
            <person name="Copeland A."/>
            <person name="Lucas S."/>
            <person name="Lapidus A."/>
            <person name="Barry K."/>
            <person name="Detter J.C."/>
            <person name="Glavina del Rio T."/>
            <person name="Dalin E."/>
            <person name="Tice H."/>
            <person name="Pitluck S."/>
            <person name="Chertkov O."/>
            <person name="Brettin T."/>
            <person name="Bruce D."/>
            <person name="Han C."/>
            <person name="Tapia R."/>
            <person name="Gilna P."/>
            <person name="Schmutz J."/>
            <person name="Larimer F."/>
            <person name="Land M."/>
            <person name="Hauser L."/>
            <person name="Kyrpides N."/>
            <person name="Kim E."/>
            <person name="Stahl D."/>
            <person name="Richardson P."/>
        </authorList>
    </citation>
    <scope>NUCLEOTIDE SEQUENCE [LARGE SCALE GENOMIC DNA]</scope>
    <source>
        <strain>JS42</strain>
    </source>
</reference>
<gene>
    <name evidence="1" type="primary">pyrD</name>
    <name type="ordered locus">Ajs_2132</name>
</gene>
<dbReference type="EC" id="1.3.5.2" evidence="1"/>
<dbReference type="EMBL" id="CP000539">
    <property type="protein sequence ID" value="ABM42301.1"/>
    <property type="molecule type" value="Genomic_DNA"/>
</dbReference>
<dbReference type="SMR" id="A1W7S6"/>
<dbReference type="STRING" id="232721.Ajs_2132"/>
<dbReference type="KEGG" id="ajs:Ajs_2132"/>
<dbReference type="eggNOG" id="COG0167">
    <property type="taxonomic scope" value="Bacteria"/>
</dbReference>
<dbReference type="HOGENOM" id="CLU_013640_2_0_4"/>
<dbReference type="UniPathway" id="UPA00070">
    <property type="reaction ID" value="UER00946"/>
</dbReference>
<dbReference type="Proteomes" id="UP000000645">
    <property type="component" value="Chromosome"/>
</dbReference>
<dbReference type="GO" id="GO:0005737">
    <property type="term" value="C:cytoplasm"/>
    <property type="evidence" value="ECO:0007669"/>
    <property type="project" value="InterPro"/>
</dbReference>
<dbReference type="GO" id="GO:0005886">
    <property type="term" value="C:plasma membrane"/>
    <property type="evidence" value="ECO:0007669"/>
    <property type="project" value="UniProtKB-SubCell"/>
</dbReference>
<dbReference type="GO" id="GO:0106430">
    <property type="term" value="F:dihydroorotate dehydrogenase (quinone) activity"/>
    <property type="evidence" value="ECO:0007669"/>
    <property type="project" value="UniProtKB-EC"/>
</dbReference>
<dbReference type="GO" id="GO:0006207">
    <property type="term" value="P:'de novo' pyrimidine nucleobase biosynthetic process"/>
    <property type="evidence" value="ECO:0007669"/>
    <property type="project" value="InterPro"/>
</dbReference>
<dbReference type="GO" id="GO:0044205">
    <property type="term" value="P:'de novo' UMP biosynthetic process"/>
    <property type="evidence" value="ECO:0007669"/>
    <property type="project" value="UniProtKB-UniRule"/>
</dbReference>
<dbReference type="CDD" id="cd04738">
    <property type="entry name" value="DHOD_2_like"/>
    <property type="match status" value="1"/>
</dbReference>
<dbReference type="Gene3D" id="3.20.20.70">
    <property type="entry name" value="Aldolase class I"/>
    <property type="match status" value="1"/>
</dbReference>
<dbReference type="HAMAP" id="MF_00225">
    <property type="entry name" value="DHO_dh_type2"/>
    <property type="match status" value="1"/>
</dbReference>
<dbReference type="InterPro" id="IPR013785">
    <property type="entry name" value="Aldolase_TIM"/>
</dbReference>
<dbReference type="InterPro" id="IPR050074">
    <property type="entry name" value="DHO_dehydrogenase"/>
</dbReference>
<dbReference type="InterPro" id="IPR012135">
    <property type="entry name" value="Dihydroorotate_DH_1_2"/>
</dbReference>
<dbReference type="InterPro" id="IPR005719">
    <property type="entry name" value="Dihydroorotate_DH_2"/>
</dbReference>
<dbReference type="InterPro" id="IPR005720">
    <property type="entry name" value="Dihydroorotate_DH_cat"/>
</dbReference>
<dbReference type="InterPro" id="IPR001295">
    <property type="entry name" value="Dihydroorotate_DH_CS"/>
</dbReference>
<dbReference type="NCBIfam" id="NF003644">
    <property type="entry name" value="PRK05286.1-1"/>
    <property type="match status" value="1"/>
</dbReference>
<dbReference type="NCBIfam" id="NF003645">
    <property type="entry name" value="PRK05286.1-2"/>
    <property type="match status" value="1"/>
</dbReference>
<dbReference type="NCBIfam" id="NF003646">
    <property type="entry name" value="PRK05286.1-4"/>
    <property type="match status" value="1"/>
</dbReference>
<dbReference type="NCBIfam" id="NF003652">
    <property type="entry name" value="PRK05286.2-5"/>
    <property type="match status" value="1"/>
</dbReference>
<dbReference type="NCBIfam" id="TIGR01036">
    <property type="entry name" value="pyrD_sub2"/>
    <property type="match status" value="1"/>
</dbReference>
<dbReference type="PANTHER" id="PTHR48109:SF4">
    <property type="entry name" value="DIHYDROOROTATE DEHYDROGENASE (QUINONE), MITOCHONDRIAL"/>
    <property type="match status" value="1"/>
</dbReference>
<dbReference type="PANTHER" id="PTHR48109">
    <property type="entry name" value="DIHYDROOROTATE DEHYDROGENASE (QUINONE), MITOCHONDRIAL-RELATED"/>
    <property type="match status" value="1"/>
</dbReference>
<dbReference type="Pfam" id="PF01180">
    <property type="entry name" value="DHO_dh"/>
    <property type="match status" value="1"/>
</dbReference>
<dbReference type="PIRSF" id="PIRSF000164">
    <property type="entry name" value="DHO_oxidase"/>
    <property type="match status" value="1"/>
</dbReference>
<dbReference type="SUPFAM" id="SSF51395">
    <property type="entry name" value="FMN-linked oxidoreductases"/>
    <property type="match status" value="1"/>
</dbReference>
<dbReference type="PROSITE" id="PS00911">
    <property type="entry name" value="DHODEHASE_1"/>
    <property type="match status" value="1"/>
</dbReference>
<dbReference type="PROSITE" id="PS00912">
    <property type="entry name" value="DHODEHASE_2"/>
    <property type="match status" value="1"/>
</dbReference>
<name>PYRD_ACISJ</name>
<organism>
    <name type="scientific">Acidovorax sp. (strain JS42)</name>
    <dbReference type="NCBI Taxonomy" id="232721"/>
    <lineage>
        <taxon>Bacteria</taxon>
        <taxon>Pseudomonadati</taxon>
        <taxon>Pseudomonadota</taxon>
        <taxon>Betaproteobacteria</taxon>
        <taxon>Burkholderiales</taxon>
        <taxon>Comamonadaceae</taxon>
        <taxon>Acidovorax</taxon>
    </lineage>
</organism>
<feature type="chain" id="PRO_1000024145" description="Dihydroorotate dehydrogenase (quinone)">
    <location>
        <begin position="1"/>
        <end position="351"/>
    </location>
</feature>
<feature type="active site" description="Nucleophile" evidence="1">
    <location>
        <position position="186"/>
    </location>
</feature>
<feature type="binding site" evidence="1">
    <location>
        <begin position="65"/>
        <end position="69"/>
    </location>
    <ligand>
        <name>FMN</name>
        <dbReference type="ChEBI" id="CHEBI:58210"/>
    </ligand>
</feature>
<feature type="binding site" evidence="1">
    <location>
        <position position="69"/>
    </location>
    <ligand>
        <name>substrate</name>
    </ligand>
</feature>
<feature type="binding site" evidence="1">
    <location>
        <position position="89"/>
    </location>
    <ligand>
        <name>FMN</name>
        <dbReference type="ChEBI" id="CHEBI:58210"/>
    </ligand>
</feature>
<feature type="binding site" evidence="1">
    <location>
        <begin position="114"/>
        <end position="118"/>
    </location>
    <ligand>
        <name>substrate</name>
    </ligand>
</feature>
<feature type="binding site" evidence="1">
    <location>
        <position position="150"/>
    </location>
    <ligand>
        <name>FMN</name>
        <dbReference type="ChEBI" id="CHEBI:58210"/>
    </ligand>
</feature>
<feature type="binding site" evidence="1">
    <location>
        <position position="183"/>
    </location>
    <ligand>
        <name>FMN</name>
        <dbReference type="ChEBI" id="CHEBI:58210"/>
    </ligand>
</feature>
<feature type="binding site" evidence="1">
    <location>
        <position position="183"/>
    </location>
    <ligand>
        <name>substrate</name>
    </ligand>
</feature>
<feature type="binding site" evidence="1">
    <location>
        <position position="188"/>
    </location>
    <ligand>
        <name>substrate</name>
    </ligand>
</feature>
<feature type="binding site" evidence="1">
    <location>
        <position position="228"/>
    </location>
    <ligand>
        <name>FMN</name>
        <dbReference type="ChEBI" id="CHEBI:58210"/>
    </ligand>
</feature>
<feature type="binding site" evidence="1">
    <location>
        <position position="256"/>
    </location>
    <ligand>
        <name>FMN</name>
        <dbReference type="ChEBI" id="CHEBI:58210"/>
    </ligand>
</feature>
<feature type="binding site" evidence="1">
    <location>
        <begin position="257"/>
        <end position="258"/>
    </location>
    <ligand>
        <name>substrate</name>
    </ligand>
</feature>
<feature type="binding site" evidence="1">
    <location>
        <position position="279"/>
    </location>
    <ligand>
        <name>FMN</name>
        <dbReference type="ChEBI" id="CHEBI:58210"/>
    </ligand>
</feature>
<feature type="binding site" evidence="1">
    <location>
        <position position="308"/>
    </location>
    <ligand>
        <name>FMN</name>
        <dbReference type="ChEBI" id="CHEBI:58210"/>
    </ligand>
</feature>
<feature type="binding site" evidence="1">
    <location>
        <begin position="329"/>
        <end position="330"/>
    </location>
    <ligand>
        <name>FMN</name>
        <dbReference type="ChEBI" id="CHEBI:58210"/>
    </ligand>
</feature>
<proteinExistence type="inferred from homology"/>